<sequence>EACDDSHPCNKTLACSGNKCLIPYGSTVWDCESGFDCVIGVVCTYHGGDKVGRCTQDHRCQRGACTNPATECDEDEVCGYKEGETCYGPCRKGLTCRLGRCRP</sequence>
<keyword id="KW-1015">Disulfide bond</keyword>
<keyword id="KW-0872">Ion channel impairing toxin</keyword>
<keyword id="KW-0528">Neurotoxin</keyword>
<keyword id="KW-0964">Secreted</keyword>
<keyword id="KW-0800">Toxin</keyword>
<evidence type="ECO:0000250" key="1"/>
<accession>P0DKP2</accession>
<feature type="chain" id="PRO_0000419858" description="Turripeptide OL55-like">
    <location>
        <begin position="1"/>
        <end position="103"/>
    </location>
</feature>
<proteinExistence type="evidence at transcript level"/>
<name>TU55_LOPAL</name>
<protein>
    <recommendedName>
        <fullName>Turripeptide OL55-like</fullName>
    </recommendedName>
</protein>
<comment type="function">
    <text evidence="1">Acts as a neurotoxin by inhibiting an ion channel.</text>
</comment>
<comment type="subcellular location">
    <subcellularLocation>
        <location evidence="1">Secreted</location>
    </subcellularLocation>
</comment>
<comment type="tissue specificity">
    <text>Expressed by the venom duct.</text>
</comment>
<comment type="domain">
    <text>The cysteine framework is C-C-C-C-C-C-C-C-C-C-C-C-C-C-C-C.</text>
</comment>
<comment type="PTM">
    <text evidence="1">Contains 8 disulfide bonds.</text>
</comment>
<reference key="1">
    <citation type="journal article" date="2006" name="J. Mol. Evol.">
        <title>Genes expressed in a turrid venom duct: divergence and similarity to conotoxins.</title>
        <authorList>
            <person name="Watkins M."/>
            <person name="Hillyard D.R."/>
            <person name="Olivera B.M."/>
        </authorList>
    </citation>
    <scope>NUCLEOTIDE SEQUENCE [MRNA]</scope>
    <source>
        <tissue>Venom duct</tissue>
    </source>
</reference>
<organism>
    <name type="scientific">Lophiotoma albina</name>
    <name type="common">Sea snail</name>
    <name type="synonym">Xenuroturris albina</name>
    <dbReference type="NCBI Taxonomy" id="3245477"/>
    <lineage>
        <taxon>Eukaryota</taxon>
        <taxon>Metazoa</taxon>
        <taxon>Spiralia</taxon>
        <taxon>Lophotrochozoa</taxon>
        <taxon>Mollusca</taxon>
        <taxon>Gastropoda</taxon>
        <taxon>Caenogastropoda</taxon>
        <taxon>Neogastropoda</taxon>
        <taxon>Conoidea</taxon>
        <taxon>Turridae</taxon>
        <taxon>Gemmula</taxon>
    </lineage>
</organism>
<dbReference type="GO" id="GO:0005576">
    <property type="term" value="C:extracellular region"/>
    <property type="evidence" value="ECO:0007669"/>
    <property type="project" value="UniProtKB-SubCell"/>
</dbReference>
<dbReference type="GO" id="GO:0099106">
    <property type="term" value="F:ion channel regulator activity"/>
    <property type="evidence" value="ECO:0007669"/>
    <property type="project" value="UniProtKB-KW"/>
</dbReference>
<dbReference type="GO" id="GO:0090729">
    <property type="term" value="F:toxin activity"/>
    <property type="evidence" value="ECO:0007669"/>
    <property type="project" value="UniProtKB-KW"/>
</dbReference>